<evidence type="ECO:0000255" key="1">
    <source>
        <dbReference type="HAMAP-Rule" id="MF_00051"/>
    </source>
</evidence>
<name>GLYA_THEAB</name>
<accession>B7IHE6</accession>
<reference key="1">
    <citation type="journal article" date="2009" name="J. Bacteriol.">
        <title>The genome of Thermosipho africanus TCF52B: lateral genetic connections to the Firmicutes and Archaea.</title>
        <authorList>
            <person name="Nesboe C.L."/>
            <person name="Bapteste E."/>
            <person name="Curtis B."/>
            <person name="Dahle H."/>
            <person name="Lopez P."/>
            <person name="Macleod D."/>
            <person name="Dlutek M."/>
            <person name="Bowman S."/>
            <person name="Zhaxybayeva O."/>
            <person name="Birkeland N.-K."/>
            <person name="Doolittle W.F."/>
        </authorList>
    </citation>
    <scope>NUCLEOTIDE SEQUENCE [LARGE SCALE GENOMIC DNA]</scope>
    <source>
        <strain>TCF52B</strain>
    </source>
</reference>
<dbReference type="EC" id="2.1.2.1" evidence="1"/>
<dbReference type="EMBL" id="CP001185">
    <property type="protein sequence ID" value="ACJ75510.1"/>
    <property type="molecule type" value="Genomic_DNA"/>
</dbReference>
<dbReference type="RefSeq" id="WP_012579961.1">
    <property type="nucleotide sequence ID" value="NC_011653.1"/>
</dbReference>
<dbReference type="SMR" id="B7IHE6"/>
<dbReference type="STRING" id="484019.THA_1054"/>
<dbReference type="KEGG" id="taf:THA_1054"/>
<dbReference type="eggNOG" id="COG0112">
    <property type="taxonomic scope" value="Bacteria"/>
</dbReference>
<dbReference type="HOGENOM" id="CLU_022477_2_1_0"/>
<dbReference type="OrthoDB" id="9803846at2"/>
<dbReference type="UniPathway" id="UPA00193"/>
<dbReference type="UniPathway" id="UPA00288">
    <property type="reaction ID" value="UER01023"/>
</dbReference>
<dbReference type="Proteomes" id="UP000002453">
    <property type="component" value="Chromosome"/>
</dbReference>
<dbReference type="GO" id="GO:0005829">
    <property type="term" value="C:cytosol"/>
    <property type="evidence" value="ECO:0007669"/>
    <property type="project" value="TreeGrafter"/>
</dbReference>
<dbReference type="GO" id="GO:0004372">
    <property type="term" value="F:glycine hydroxymethyltransferase activity"/>
    <property type="evidence" value="ECO:0007669"/>
    <property type="project" value="UniProtKB-UniRule"/>
</dbReference>
<dbReference type="GO" id="GO:0030170">
    <property type="term" value="F:pyridoxal phosphate binding"/>
    <property type="evidence" value="ECO:0007669"/>
    <property type="project" value="UniProtKB-UniRule"/>
</dbReference>
<dbReference type="GO" id="GO:0019264">
    <property type="term" value="P:glycine biosynthetic process from serine"/>
    <property type="evidence" value="ECO:0007669"/>
    <property type="project" value="UniProtKB-UniRule"/>
</dbReference>
<dbReference type="GO" id="GO:0035999">
    <property type="term" value="P:tetrahydrofolate interconversion"/>
    <property type="evidence" value="ECO:0007669"/>
    <property type="project" value="UniProtKB-UniRule"/>
</dbReference>
<dbReference type="CDD" id="cd00378">
    <property type="entry name" value="SHMT"/>
    <property type="match status" value="1"/>
</dbReference>
<dbReference type="FunFam" id="3.40.640.10:FF:000001">
    <property type="entry name" value="Serine hydroxymethyltransferase"/>
    <property type="match status" value="1"/>
</dbReference>
<dbReference type="FunFam" id="3.90.1150.10:FF:000003">
    <property type="entry name" value="Serine hydroxymethyltransferase"/>
    <property type="match status" value="1"/>
</dbReference>
<dbReference type="Gene3D" id="3.90.1150.10">
    <property type="entry name" value="Aspartate Aminotransferase, domain 1"/>
    <property type="match status" value="1"/>
</dbReference>
<dbReference type="Gene3D" id="3.40.640.10">
    <property type="entry name" value="Type I PLP-dependent aspartate aminotransferase-like (Major domain)"/>
    <property type="match status" value="1"/>
</dbReference>
<dbReference type="HAMAP" id="MF_00051">
    <property type="entry name" value="SHMT"/>
    <property type="match status" value="1"/>
</dbReference>
<dbReference type="InterPro" id="IPR015424">
    <property type="entry name" value="PyrdxlP-dep_Trfase"/>
</dbReference>
<dbReference type="InterPro" id="IPR015421">
    <property type="entry name" value="PyrdxlP-dep_Trfase_major"/>
</dbReference>
<dbReference type="InterPro" id="IPR015422">
    <property type="entry name" value="PyrdxlP-dep_Trfase_small"/>
</dbReference>
<dbReference type="InterPro" id="IPR001085">
    <property type="entry name" value="Ser_HO-MeTrfase"/>
</dbReference>
<dbReference type="InterPro" id="IPR049943">
    <property type="entry name" value="Ser_HO-MeTrfase-like"/>
</dbReference>
<dbReference type="InterPro" id="IPR019798">
    <property type="entry name" value="Ser_HO-MeTrfase_PLP_BS"/>
</dbReference>
<dbReference type="InterPro" id="IPR039429">
    <property type="entry name" value="SHMT-like_dom"/>
</dbReference>
<dbReference type="NCBIfam" id="NF000586">
    <property type="entry name" value="PRK00011.1"/>
    <property type="match status" value="1"/>
</dbReference>
<dbReference type="PANTHER" id="PTHR11680">
    <property type="entry name" value="SERINE HYDROXYMETHYLTRANSFERASE"/>
    <property type="match status" value="1"/>
</dbReference>
<dbReference type="PANTHER" id="PTHR11680:SF35">
    <property type="entry name" value="SERINE HYDROXYMETHYLTRANSFERASE 1"/>
    <property type="match status" value="1"/>
</dbReference>
<dbReference type="Pfam" id="PF00464">
    <property type="entry name" value="SHMT"/>
    <property type="match status" value="1"/>
</dbReference>
<dbReference type="PIRSF" id="PIRSF000412">
    <property type="entry name" value="SHMT"/>
    <property type="match status" value="1"/>
</dbReference>
<dbReference type="SUPFAM" id="SSF53383">
    <property type="entry name" value="PLP-dependent transferases"/>
    <property type="match status" value="1"/>
</dbReference>
<dbReference type="PROSITE" id="PS00096">
    <property type="entry name" value="SHMT"/>
    <property type="match status" value="1"/>
</dbReference>
<proteinExistence type="inferred from homology"/>
<sequence length="424" mass="46865">MWENVKKTDPEIYDVILKEWERQEYGLELIASENFASLAVIEAMGSVLTNKYAEGYPGRRYYGGCEWVDVAEKLARDRAKELFNVKYANVQPHSGSQANMGAYFAVSEPGDTIMGMSLSHGGHLTHGASVNFSGRIYNVVPYGVNPETEVIDYDEVRDLALKHKPKIIVAGGSAYSRIIDFKKFREIADEVGAYLIVDMAHFAGLVAAGIYPNPAEYAHIVTSTTHKTLRGPRGGMILTNDNELYKAINKSIFPGIQGGPLMHVIAAKAVCFKEALTDEFKEYQKQVVKNAKTLAAELEKRGLRIVSGGTDTHLMLVDLNPLNVTGKAAEIALGKCHITVNKNTIPNETRSPFIASGIRLGTPALTTRGMKESEMEEIAELIVDVLKHVKDEEGNVDEEIVEKTQKKVKDLCTRFPLYEGKIKL</sequence>
<gene>
    <name evidence="1" type="primary">glyA</name>
    <name type="ordered locus">THA_1054</name>
</gene>
<feature type="chain" id="PRO_1000116836" description="Serine hydroxymethyltransferase">
    <location>
        <begin position="1"/>
        <end position="424"/>
    </location>
</feature>
<feature type="binding site" evidence="1">
    <location>
        <position position="118"/>
    </location>
    <ligand>
        <name>(6S)-5,6,7,8-tetrahydrofolate</name>
        <dbReference type="ChEBI" id="CHEBI:57453"/>
    </ligand>
</feature>
<feature type="binding site" evidence="1">
    <location>
        <begin position="122"/>
        <end position="124"/>
    </location>
    <ligand>
        <name>(6S)-5,6,7,8-tetrahydrofolate</name>
        <dbReference type="ChEBI" id="CHEBI:57453"/>
    </ligand>
</feature>
<feature type="binding site" evidence="1">
    <location>
        <position position="243"/>
    </location>
    <ligand>
        <name>(6S)-5,6,7,8-tetrahydrofolate</name>
        <dbReference type="ChEBI" id="CHEBI:57453"/>
    </ligand>
</feature>
<feature type="binding site" evidence="1">
    <location>
        <begin position="351"/>
        <end position="353"/>
    </location>
    <ligand>
        <name>(6S)-5,6,7,8-tetrahydrofolate</name>
        <dbReference type="ChEBI" id="CHEBI:57453"/>
    </ligand>
</feature>
<feature type="site" description="Plays an important role in substrate specificity" evidence="1">
    <location>
        <position position="226"/>
    </location>
</feature>
<feature type="modified residue" description="N6-(pyridoxal phosphate)lysine" evidence="1">
    <location>
        <position position="227"/>
    </location>
</feature>
<organism>
    <name type="scientific">Thermosipho africanus (strain TCF52B)</name>
    <dbReference type="NCBI Taxonomy" id="484019"/>
    <lineage>
        <taxon>Bacteria</taxon>
        <taxon>Thermotogati</taxon>
        <taxon>Thermotogota</taxon>
        <taxon>Thermotogae</taxon>
        <taxon>Thermotogales</taxon>
        <taxon>Fervidobacteriaceae</taxon>
        <taxon>Thermosipho</taxon>
    </lineage>
</organism>
<comment type="function">
    <text evidence="1">Catalyzes the reversible interconversion of serine and glycine with tetrahydrofolate (THF) serving as the one-carbon carrier. This reaction serves as the major source of one-carbon groups required for the biosynthesis of purines, thymidylate, methionine, and other important biomolecules. Also exhibits THF-independent aldolase activity toward beta-hydroxyamino acids, producing glycine and aldehydes, via a retro-aldol mechanism.</text>
</comment>
<comment type="catalytic activity">
    <reaction evidence="1">
        <text>(6R)-5,10-methylene-5,6,7,8-tetrahydrofolate + glycine + H2O = (6S)-5,6,7,8-tetrahydrofolate + L-serine</text>
        <dbReference type="Rhea" id="RHEA:15481"/>
        <dbReference type="ChEBI" id="CHEBI:15377"/>
        <dbReference type="ChEBI" id="CHEBI:15636"/>
        <dbReference type="ChEBI" id="CHEBI:33384"/>
        <dbReference type="ChEBI" id="CHEBI:57305"/>
        <dbReference type="ChEBI" id="CHEBI:57453"/>
        <dbReference type="EC" id="2.1.2.1"/>
    </reaction>
</comment>
<comment type="cofactor">
    <cofactor evidence="1">
        <name>pyridoxal 5'-phosphate</name>
        <dbReference type="ChEBI" id="CHEBI:597326"/>
    </cofactor>
</comment>
<comment type="pathway">
    <text evidence="1">One-carbon metabolism; tetrahydrofolate interconversion.</text>
</comment>
<comment type="pathway">
    <text evidence="1">Amino-acid biosynthesis; glycine biosynthesis; glycine from L-serine: step 1/1.</text>
</comment>
<comment type="subunit">
    <text evidence="1">Homodimer.</text>
</comment>
<comment type="subcellular location">
    <subcellularLocation>
        <location evidence="1">Cytoplasm</location>
    </subcellularLocation>
</comment>
<comment type="similarity">
    <text evidence="1">Belongs to the SHMT family.</text>
</comment>
<keyword id="KW-0028">Amino-acid biosynthesis</keyword>
<keyword id="KW-0963">Cytoplasm</keyword>
<keyword id="KW-0554">One-carbon metabolism</keyword>
<keyword id="KW-0663">Pyridoxal phosphate</keyword>
<keyword id="KW-1185">Reference proteome</keyword>
<keyword id="KW-0808">Transferase</keyword>
<protein>
    <recommendedName>
        <fullName evidence="1">Serine hydroxymethyltransferase</fullName>
        <shortName evidence="1">SHMT</shortName>
        <shortName evidence="1">Serine methylase</shortName>
        <ecNumber evidence="1">2.1.2.1</ecNumber>
    </recommendedName>
</protein>